<comment type="subcellular location">
    <subcellularLocation>
        <location evidence="1">Cell inner membrane</location>
        <topology evidence="1">Multi-pass membrane protein</topology>
    </subcellularLocation>
</comment>
<comment type="similarity">
    <text evidence="3">Belongs to the UPF0283 family.</text>
</comment>
<sequence>MTEPLKPRIDFDGPLEVEQNPKFRAQQTFDENQAQNFAPATLDEAQEEEGQVEAVMDAALRPKRSLWRKMVMGGLALFGASVVGQGVQWTMNAWQTQDWVALGGCAAGALIIGAGVGSVVTEWRRLWRLRQRAHERDEARDLLHSHGTGKGRAFCEKLAQQAGIDQSHPALQRWYASIHETQNDREVVSLYAHLVQPVLDAQARREISRSAAESTLMIAVSPLALVDMAFIAWRNLRLINRIATLYGIELGYYSRLRLFKLVLLNIAFAGASELVREVGMDWMSQDLAARLSTRAAQGIGAGLLTARLGIKAMELCRPLPWIDDDKPRLGDFRRQLIGQVKETLQKGKTPSEK</sequence>
<gene>
    <name type="primary">ycjF</name>
    <name type="ordered locus">Z2456</name>
    <name type="ordered locus">ECs1901</name>
</gene>
<feature type="chain" id="PRO_0000214174" description="UPF0283 membrane protein YcjF">
    <location>
        <begin position="1"/>
        <end position="353"/>
    </location>
</feature>
<feature type="topological domain" description="Periplasmic" evidence="2">
    <location>
        <begin position="1"/>
        <end position="69"/>
    </location>
</feature>
<feature type="transmembrane region" description="Helical" evidence="2">
    <location>
        <begin position="70"/>
        <end position="90"/>
    </location>
</feature>
<feature type="topological domain" description="Cytoplasmic" evidence="2">
    <location>
        <begin position="91"/>
        <end position="99"/>
    </location>
</feature>
<feature type="transmembrane region" description="Helical" evidence="2">
    <location>
        <begin position="100"/>
        <end position="120"/>
    </location>
</feature>
<feature type="topological domain" description="Periplasmic" evidence="2">
    <location>
        <begin position="121"/>
        <end position="212"/>
    </location>
</feature>
<feature type="transmembrane region" description="Helical" evidence="2">
    <location>
        <begin position="213"/>
        <end position="233"/>
    </location>
</feature>
<feature type="topological domain" description="Cytoplasmic" evidence="2">
    <location>
        <begin position="234"/>
        <end position="353"/>
    </location>
</feature>
<protein>
    <recommendedName>
        <fullName>UPF0283 membrane protein YcjF</fullName>
    </recommendedName>
</protein>
<dbReference type="EMBL" id="AE005174">
    <property type="protein sequence ID" value="AAG56480.1"/>
    <property type="molecule type" value="Genomic_DNA"/>
</dbReference>
<dbReference type="EMBL" id="BA000007">
    <property type="protein sequence ID" value="BAB35324.1"/>
    <property type="molecule type" value="Genomic_DNA"/>
</dbReference>
<dbReference type="PIR" id="D85752">
    <property type="entry name" value="D85752"/>
</dbReference>
<dbReference type="PIR" id="E90866">
    <property type="entry name" value="E90866"/>
</dbReference>
<dbReference type="RefSeq" id="NP_309928.1">
    <property type="nucleotide sequence ID" value="NC_002695.1"/>
</dbReference>
<dbReference type="RefSeq" id="WP_000138748.1">
    <property type="nucleotide sequence ID" value="NZ_VOAI01000015.1"/>
</dbReference>
<dbReference type="SMR" id="Q8X8K9"/>
<dbReference type="STRING" id="155864.Z2456"/>
<dbReference type="GeneID" id="912484"/>
<dbReference type="KEGG" id="ece:Z2456"/>
<dbReference type="KEGG" id="ecs:ECs_1901"/>
<dbReference type="PATRIC" id="fig|386585.9.peg.2006"/>
<dbReference type="eggNOG" id="COG3768">
    <property type="taxonomic scope" value="Bacteria"/>
</dbReference>
<dbReference type="HOGENOM" id="CLU_057693_2_0_6"/>
<dbReference type="OMA" id="MFFIAWR"/>
<dbReference type="Proteomes" id="UP000000558">
    <property type="component" value="Chromosome"/>
</dbReference>
<dbReference type="Proteomes" id="UP000002519">
    <property type="component" value="Chromosome"/>
</dbReference>
<dbReference type="GO" id="GO:0005886">
    <property type="term" value="C:plasma membrane"/>
    <property type="evidence" value="ECO:0007669"/>
    <property type="project" value="UniProtKB-SubCell"/>
</dbReference>
<dbReference type="HAMAP" id="MF_01085">
    <property type="entry name" value="UPF0283"/>
    <property type="match status" value="1"/>
</dbReference>
<dbReference type="InterPro" id="IPR021147">
    <property type="entry name" value="DUF697"/>
</dbReference>
<dbReference type="InterPro" id="IPR006507">
    <property type="entry name" value="UPF0283"/>
</dbReference>
<dbReference type="NCBIfam" id="TIGR01620">
    <property type="entry name" value="hyp_HI0043"/>
    <property type="match status" value="1"/>
</dbReference>
<dbReference type="PANTHER" id="PTHR39342">
    <property type="entry name" value="UPF0283 MEMBRANE PROTEIN YCJF"/>
    <property type="match status" value="1"/>
</dbReference>
<dbReference type="PANTHER" id="PTHR39342:SF1">
    <property type="entry name" value="UPF0283 MEMBRANE PROTEIN YCJF"/>
    <property type="match status" value="1"/>
</dbReference>
<dbReference type="Pfam" id="PF05128">
    <property type="entry name" value="DUF697"/>
    <property type="match status" value="1"/>
</dbReference>
<accession>Q8X8K9</accession>
<organism>
    <name type="scientific">Escherichia coli O157:H7</name>
    <dbReference type="NCBI Taxonomy" id="83334"/>
    <lineage>
        <taxon>Bacteria</taxon>
        <taxon>Pseudomonadati</taxon>
        <taxon>Pseudomonadota</taxon>
        <taxon>Gammaproteobacteria</taxon>
        <taxon>Enterobacterales</taxon>
        <taxon>Enterobacteriaceae</taxon>
        <taxon>Escherichia</taxon>
    </lineage>
</organism>
<reference key="1">
    <citation type="journal article" date="2001" name="Nature">
        <title>Genome sequence of enterohaemorrhagic Escherichia coli O157:H7.</title>
        <authorList>
            <person name="Perna N.T."/>
            <person name="Plunkett G. III"/>
            <person name="Burland V."/>
            <person name="Mau B."/>
            <person name="Glasner J.D."/>
            <person name="Rose D.J."/>
            <person name="Mayhew G.F."/>
            <person name="Evans P.S."/>
            <person name="Gregor J."/>
            <person name="Kirkpatrick H.A."/>
            <person name="Posfai G."/>
            <person name="Hackett J."/>
            <person name="Klink S."/>
            <person name="Boutin A."/>
            <person name="Shao Y."/>
            <person name="Miller L."/>
            <person name="Grotbeck E.J."/>
            <person name="Davis N.W."/>
            <person name="Lim A."/>
            <person name="Dimalanta E.T."/>
            <person name="Potamousis K."/>
            <person name="Apodaca J."/>
            <person name="Anantharaman T.S."/>
            <person name="Lin J."/>
            <person name="Yen G."/>
            <person name="Schwartz D.C."/>
            <person name="Welch R.A."/>
            <person name="Blattner F.R."/>
        </authorList>
    </citation>
    <scope>NUCLEOTIDE SEQUENCE [LARGE SCALE GENOMIC DNA]</scope>
    <source>
        <strain>O157:H7 / EDL933 / ATCC 700927 / EHEC</strain>
    </source>
</reference>
<reference key="2">
    <citation type="journal article" date="2001" name="DNA Res.">
        <title>Complete genome sequence of enterohemorrhagic Escherichia coli O157:H7 and genomic comparison with a laboratory strain K-12.</title>
        <authorList>
            <person name="Hayashi T."/>
            <person name="Makino K."/>
            <person name="Ohnishi M."/>
            <person name="Kurokawa K."/>
            <person name="Ishii K."/>
            <person name="Yokoyama K."/>
            <person name="Han C.-G."/>
            <person name="Ohtsubo E."/>
            <person name="Nakayama K."/>
            <person name="Murata T."/>
            <person name="Tanaka M."/>
            <person name="Tobe T."/>
            <person name="Iida T."/>
            <person name="Takami H."/>
            <person name="Honda T."/>
            <person name="Sasakawa C."/>
            <person name="Ogasawara N."/>
            <person name="Yasunaga T."/>
            <person name="Kuhara S."/>
            <person name="Shiba T."/>
            <person name="Hattori M."/>
            <person name="Shinagawa H."/>
        </authorList>
    </citation>
    <scope>NUCLEOTIDE SEQUENCE [LARGE SCALE GENOMIC DNA]</scope>
    <source>
        <strain>O157:H7 / Sakai / RIMD 0509952 / EHEC</strain>
    </source>
</reference>
<evidence type="ECO:0000250" key="1"/>
<evidence type="ECO:0000255" key="2"/>
<evidence type="ECO:0000305" key="3"/>
<proteinExistence type="inferred from homology"/>
<keyword id="KW-0997">Cell inner membrane</keyword>
<keyword id="KW-1003">Cell membrane</keyword>
<keyword id="KW-0472">Membrane</keyword>
<keyword id="KW-1185">Reference proteome</keyword>
<keyword id="KW-0812">Transmembrane</keyword>
<keyword id="KW-1133">Transmembrane helix</keyword>
<name>YCJF_ECO57</name>